<gene>
    <name type="ordered locus">BURPS668_2420</name>
</gene>
<accession>A3NAT0</accession>
<protein>
    <recommendedName>
        <fullName evidence="1">Putative phosphoenolpyruvate synthase regulatory protein</fullName>
        <shortName evidence="1">PEP synthase regulatory protein</shortName>
        <shortName evidence="1">PSRP</shortName>
        <ecNumber evidence="1">2.7.11.33</ecNumber>
        <ecNumber evidence="1">2.7.4.28</ecNumber>
    </recommendedName>
    <alternativeName>
        <fullName evidence="1">Pyruvate, water dikinase regulatory protein</fullName>
    </alternativeName>
</protein>
<sequence>MLPTVFIVSDGTGITAETFAHSILSQFDQKFRLVRVPFIDSIEKAYDTVRKINDAAQHDGRRPIVFTTLVDGESNEIVKRSNALVLDMFQRFVEPLEQELQLKSSHAMGRVHQNADTEEYKTRIEAINFSLAHDDGQSNRNLADADVILIGVSRSGKTPTSLYLAMQYGVKAANYPLIPEDFERGKLPTPLHPHRDKLFGLSIDPMRLSEIRNERRPGSKYAAPENCRYEINEAEAMMRREGVKWLSSTHKSIEEIATTILQEIKLERQSY</sequence>
<dbReference type="EC" id="2.7.11.33" evidence="1"/>
<dbReference type="EC" id="2.7.4.28" evidence="1"/>
<dbReference type="EMBL" id="CP000570">
    <property type="protein sequence ID" value="ABN82690.1"/>
    <property type="molecule type" value="Genomic_DNA"/>
</dbReference>
<dbReference type="RefSeq" id="WP_004192738.1">
    <property type="nucleotide sequence ID" value="NC_009074.1"/>
</dbReference>
<dbReference type="SMR" id="A3NAT0"/>
<dbReference type="KEGG" id="bpd:BURPS668_2420"/>
<dbReference type="HOGENOM" id="CLU_046206_1_0_4"/>
<dbReference type="GO" id="GO:0043531">
    <property type="term" value="F:ADP binding"/>
    <property type="evidence" value="ECO:0007669"/>
    <property type="project" value="UniProtKB-UniRule"/>
</dbReference>
<dbReference type="GO" id="GO:0005524">
    <property type="term" value="F:ATP binding"/>
    <property type="evidence" value="ECO:0007669"/>
    <property type="project" value="InterPro"/>
</dbReference>
<dbReference type="GO" id="GO:0016776">
    <property type="term" value="F:phosphotransferase activity, phosphate group as acceptor"/>
    <property type="evidence" value="ECO:0007669"/>
    <property type="project" value="UniProtKB-UniRule"/>
</dbReference>
<dbReference type="GO" id="GO:0004674">
    <property type="term" value="F:protein serine/threonine kinase activity"/>
    <property type="evidence" value="ECO:0007669"/>
    <property type="project" value="UniProtKB-UniRule"/>
</dbReference>
<dbReference type="HAMAP" id="MF_01062">
    <property type="entry name" value="PSRP"/>
    <property type="match status" value="1"/>
</dbReference>
<dbReference type="InterPro" id="IPR005177">
    <property type="entry name" value="Kinase-pyrophosphorylase"/>
</dbReference>
<dbReference type="InterPro" id="IPR026530">
    <property type="entry name" value="PSRP"/>
</dbReference>
<dbReference type="NCBIfam" id="NF003742">
    <property type="entry name" value="PRK05339.1"/>
    <property type="match status" value="1"/>
</dbReference>
<dbReference type="PANTHER" id="PTHR31756">
    <property type="entry name" value="PYRUVATE, PHOSPHATE DIKINASE REGULATORY PROTEIN 1, CHLOROPLASTIC"/>
    <property type="match status" value="1"/>
</dbReference>
<dbReference type="PANTHER" id="PTHR31756:SF3">
    <property type="entry name" value="PYRUVATE, PHOSPHATE DIKINASE REGULATORY PROTEIN 1, CHLOROPLASTIC"/>
    <property type="match status" value="1"/>
</dbReference>
<dbReference type="Pfam" id="PF03618">
    <property type="entry name" value="Kinase-PPPase"/>
    <property type="match status" value="1"/>
</dbReference>
<reference key="1">
    <citation type="journal article" date="2010" name="Genome Biol. Evol.">
        <title>Continuing evolution of Burkholderia mallei through genome reduction and large-scale rearrangements.</title>
        <authorList>
            <person name="Losada L."/>
            <person name="Ronning C.M."/>
            <person name="DeShazer D."/>
            <person name="Woods D."/>
            <person name="Fedorova N."/>
            <person name="Kim H.S."/>
            <person name="Shabalina S.A."/>
            <person name="Pearson T.R."/>
            <person name="Brinkac L."/>
            <person name="Tan P."/>
            <person name="Nandi T."/>
            <person name="Crabtree J."/>
            <person name="Badger J."/>
            <person name="Beckstrom-Sternberg S."/>
            <person name="Saqib M."/>
            <person name="Schutzer S.E."/>
            <person name="Keim P."/>
            <person name="Nierman W.C."/>
        </authorList>
    </citation>
    <scope>NUCLEOTIDE SEQUENCE [LARGE SCALE GENOMIC DNA]</scope>
    <source>
        <strain>668</strain>
    </source>
</reference>
<comment type="function">
    <text evidence="1">Bifunctional serine/threonine kinase and phosphorylase involved in the regulation of the phosphoenolpyruvate synthase (PEPS) by catalyzing its phosphorylation/dephosphorylation.</text>
</comment>
<comment type="catalytic activity">
    <reaction evidence="1">
        <text>[pyruvate, water dikinase] + ADP = [pyruvate, water dikinase]-phosphate + AMP + H(+)</text>
        <dbReference type="Rhea" id="RHEA:46020"/>
        <dbReference type="Rhea" id="RHEA-COMP:11425"/>
        <dbReference type="Rhea" id="RHEA-COMP:11426"/>
        <dbReference type="ChEBI" id="CHEBI:15378"/>
        <dbReference type="ChEBI" id="CHEBI:43176"/>
        <dbReference type="ChEBI" id="CHEBI:68546"/>
        <dbReference type="ChEBI" id="CHEBI:456215"/>
        <dbReference type="ChEBI" id="CHEBI:456216"/>
        <dbReference type="EC" id="2.7.11.33"/>
    </reaction>
</comment>
<comment type="catalytic activity">
    <reaction evidence="1">
        <text>[pyruvate, water dikinase]-phosphate + phosphate + H(+) = [pyruvate, water dikinase] + diphosphate</text>
        <dbReference type="Rhea" id="RHEA:48580"/>
        <dbReference type="Rhea" id="RHEA-COMP:11425"/>
        <dbReference type="Rhea" id="RHEA-COMP:11426"/>
        <dbReference type="ChEBI" id="CHEBI:15378"/>
        <dbReference type="ChEBI" id="CHEBI:33019"/>
        <dbReference type="ChEBI" id="CHEBI:43176"/>
        <dbReference type="ChEBI" id="CHEBI:43474"/>
        <dbReference type="ChEBI" id="CHEBI:68546"/>
        <dbReference type="EC" id="2.7.4.28"/>
    </reaction>
</comment>
<comment type="similarity">
    <text evidence="1">Belongs to the pyruvate, phosphate/water dikinase regulatory protein family. PSRP subfamily.</text>
</comment>
<proteinExistence type="inferred from homology"/>
<evidence type="ECO:0000255" key="1">
    <source>
        <dbReference type="HAMAP-Rule" id="MF_01062"/>
    </source>
</evidence>
<feature type="chain" id="PRO_0000316652" description="Putative phosphoenolpyruvate synthase regulatory protein">
    <location>
        <begin position="1"/>
        <end position="271"/>
    </location>
</feature>
<feature type="binding site" evidence="1">
    <location>
        <begin position="151"/>
        <end position="158"/>
    </location>
    <ligand>
        <name>ADP</name>
        <dbReference type="ChEBI" id="CHEBI:456216"/>
    </ligand>
</feature>
<organism>
    <name type="scientific">Burkholderia pseudomallei (strain 668)</name>
    <dbReference type="NCBI Taxonomy" id="320373"/>
    <lineage>
        <taxon>Bacteria</taxon>
        <taxon>Pseudomonadati</taxon>
        <taxon>Pseudomonadota</taxon>
        <taxon>Betaproteobacteria</taxon>
        <taxon>Burkholderiales</taxon>
        <taxon>Burkholderiaceae</taxon>
        <taxon>Burkholderia</taxon>
        <taxon>pseudomallei group</taxon>
    </lineage>
</organism>
<name>PSRP_BURP6</name>
<keyword id="KW-0418">Kinase</keyword>
<keyword id="KW-0547">Nucleotide-binding</keyword>
<keyword id="KW-0723">Serine/threonine-protein kinase</keyword>
<keyword id="KW-0808">Transferase</keyword>